<protein>
    <recommendedName>
        <fullName evidence="1">Diaminopimelate epimerase</fullName>
        <shortName evidence="1">DAP epimerase</shortName>
        <ecNumber evidence="1">5.1.1.7</ecNumber>
    </recommendedName>
    <alternativeName>
        <fullName evidence="1">PLP-independent amino acid racemase</fullName>
    </alternativeName>
</protein>
<sequence>MGIKFTKMHGLGNDFIVLDGVNQSIQLTVKQIQKLANRHTGIGFDQCLLIESSQTEGIDFNYRIFNADGQEVGQCGNGARCIALFARYYGLTAKNKLTVATKTTLMDLIINEDNSVSVNMGVPRLAPGEIPLLADRQSPEYSLELNNGNTVNLHAISIGNPHAVLLVENIDTAPVNSLGQQISFHPQFPEQVNVGFMQIVNHEKINLRVYERGCGETIACGSGAVAAAAIARLFYNLSDKITVHLPGGDLCIQWPCPTAPIILTGPAAFVYEGTLLS</sequence>
<evidence type="ECO:0000255" key="1">
    <source>
        <dbReference type="HAMAP-Rule" id="MF_00197"/>
    </source>
</evidence>
<organism>
    <name type="scientific">Legionella pneumophila (strain Paris)</name>
    <dbReference type="NCBI Taxonomy" id="297246"/>
    <lineage>
        <taxon>Bacteria</taxon>
        <taxon>Pseudomonadati</taxon>
        <taxon>Pseudomonadota</taxon>
        <taxon>Gammaproteobacteria</taxon>
        <taxon>Legionellales</taxon>
        <taxon>Legionellaceae</taxon>
        <taxon>Legionella</taxon>
    </lineage>
</organism>
<accession>Q5X822</accession>
<gene>
    <name evidence="1" type="primary">dapF</name>
    <name type="ordered locus">lpp0431</name>
</gene>
<feature type="chain" id="PRO_1000011893" description="Diaminopimelate epimerase">
    <location>
        <begin position="1"/>
        <end position="277"/>
    </location>
</feature>
<feature type="active site" description="Proton donor" evidence="1">
    <location>
        <position position="75"/>
    </location>
</feature>
<feature type="active site" description="Proton acceptor" evidence="1">
    <location>
        <position position="220"/>
    </location>
</feature>
<feature type="binding site" evidence="1">
    <location>
        <position position="13"/>
    </location>
    <ligand>
        <name>substrate</name>
    </ligand>
</feature>
<feature type="binding site" evidence="1">
    <location>
        <position position="46"/>
    </location>
    <ligand>
        <name>substrate</name>
    </ligand>
</feature>
<feature type="binding site" evidence="1">
    <location>
        <position position="66"/>
    </location>
    <ligand>
        <name>substrate</name>
    </ligand>
</feature>
<feature type="binding site" evidence="1">
    <location>
        <begin position="76"/>
        <end position="77"/>
    </location>
    <ligand>
        <name>substrate</name>
    </ligand>
</feature>
<feature type="binding site" evidence="1">
    <location>
        <position position="160"/>
    </location>
    <ligand>
        <name>substrate</name>
    </ligand>
</feature>
<feature type="binding site" evidence="1">
    <location>
        <position position="193"/>
    </location>
    <ligand>
        <name>substrate</name>
    </ligand>
</feature>
<feature type="binding site" evidence="1">
    <location>
        <begin position="211"/>
        <end position="212"/>
    </location>
    <ligand>
        <name>substrate</name>
    </ligand>
</feature>
<feature type="binding site" evidence="1">
    <location>
        <begin position="221"/>
        <end position="222"/>
    </location>
    <ligand>
        <name>substrate</name>
    </ligand>
</feature>
<feature type="site" description="Could be important to modulate the pK values of the two catalytic cysteine residues" evidence="1">
    <location>
        <position position="162"/>
    </location>
</feature>
<feature type="site" description="Could be important to modulate the pK values of the two catalytic cysteine residues" evidence="1">
    <location>
        <position position="211"/>
    </location>
</feature>
<feature type="site" description="Important for dimerization" evidence="1">
    <location>
        <position position="271"/>
    </location>
</feature>
<keyword id="KW-0028">Amino-acid biosynthesis</keyword>
<keyword id="KW-0963">Cytoplasm</keyword>
<keyword id="KW-0413">Isomerase</keyword>
<keyword id="KW-0457">Lysine biosynthesis</keyword>
<name>DAPF_LEGPA</name>
<proteinExistence type="inferred from homology"/>
<comment type="function">
    <text evidence="1">Catalyzes the stereoinversion of LL-2,6-diaminopimelate (L,L-DAP) to meso-diaminopimelate (meso-DAP), a precursor of L-lysine and an essential component of the bacterial peptidoglycan.</text>
</comment>
<comment type="catalytic activity">
    <reaction evidence="1">
        <text>(2S,6S)-2,6-diaminopimelate = meso-2,6-diaminopimelate</text>
        <dbReference type="Rhea" id="RHEA:15393"/>
        <dbReference type="ChEBI" id="CHEBI:57609"/>
        <dbReference type="ChEBI" id="CHEBI:57791"/>
        <dbReference type="EC" id="5.1.1.7"/>
    </reaction>
</comment>
<comment type="pathway">
    <text evidence="1">Amino-acid biosynthesis; L-lysine biosynthesis via DAP pathway; DL-2,6-diaminopimelate from LL-2,6-diaminopimelate: step 1/1.</text>
</comment>
<comment type="subunit">
    <text evidence="1">Homodimer.</text>
</comment>
<comment type="subcellular location">
    <subcellularLocation>
        <location evidence="1">Cytoplasm</location>
    </subcellularLocation>
</comment>
<comment type="similarity">
    <text evidence="1">Belongs to the diaminopimelate epimerase family.</text>
</comment>
<dbReference type="EC" id="5.1.1.7" evidence="1"/>
<dbReference type="EMBL" id="CR628336">
    <property type="protein sequence ID" value="CAH11579.1"/>
    <property type="molecule type" value="Genomic_DNA"/>
</dbReference>
<dbReference type="RefSeq" id="WP_011213025.1">
    <property type="nucleotide sequence ID" value="NC_006368.1"/>
</dbReference>
<dbReference type="SMR" id="Q5X822"/>
<dbReference type="KEGG" id="lpp:lpp0431"/>
<dbReference type="LegioList" id="lpp0431"/>
<dbReference type="HOGENOM" id="CLU_053306_1_1_6"/>
<dbReference type="UniPathway" id="UPA00034">
    <property type="reaction ID" value="UER00025"/>
</dbReference>
<dbReference type="GO" id="GO:0005829">
    <property type="term" value="C:cytosol"/>
    <property type="evidence" value="ECO:0007669"/>
    <property type="project" value="TreeGrafter"/>
</dbReference>
<dbReference type="GO" id="GO:0008837">
    <property type="term" value="F:diaminopimelate epimerase activity"/>
    <property type="evidence" value="ECO:0007669"/>
    <property type="project" value="UniProtKB-UniRule"/>
</dbReference>
<dbReference type="GO" id="GO:0009089">
    <property type="term" value="P:lysine biosynthetic process via diaminopimelate"/>
    <property type="evidence" value="ECO:0007669"/>
    <property type="project" value="UniProtKB-UniRule"/>
</dbReference>
<dbReference type="FunFam" id="3.10.310.10:FF:000001">
    <property type="entry name" value="Diaminopimelate epimerase"/>
    <property type="match status" value="1"/>
</dbReference>
<dbReference type="Gene3D" id="3.10.310.10">
    <property type="entry name" value="Diaminopimelate Epimerase, Chain A, domain 1"/>
    <property type="match status" value="2"/>
</dbReference>
<dbReference type="HAMAP" id="MF_00197">
    <property type="entry name" value="DAP_epimerase"/>
    <property type="match status" value="1"/>
</dbReference>
<dbReference type="InterPro" id="IPR001653">
    <property type="entry name" value="DAP_epimerase_DapF"/>
</dbReference>
<dbReference type="NCBIfam" id="TIGR00652">
    <property type="entry name" value="DapF"/>
    <property type="match status" value="1"/>
</dbReference>
<dbReference type="PANTHER" id="PTHR31689:SF0">
    <property type="entry name" value="DIAMINOPIMELATE EPIMERASE"/>
    <property type="match status" value="1"/>
</dbReference>
<dbReference type="PANTHER" id="PTHR31689">
    <property type="entry name" value="DIAMINOPIMELATE EPIMERASE, CHLOROPLASTIC"/>
    <property type="match status" value="1"/>
</dbReference>
<dbReference type="Pfam" id="PF01678">
    <property type="entry name" value="DAP_epimerase"/>
    <property type="match status" value="2"/>
</dbReference>
<dbReference type="SUPFAM" id="SSF54506">
    <property type="entry name" value="Diaminopimelate epimerase-like"/>
    <property type="match status" value="2"/>
</dbReference>
<reference key="1">
    <citation type="journal article" date="2004" name="Nat. Genet.">
        <title>Evidence in the Legionella pneumophila genome for exploitation of host cell functions and high genome plasticity.</title>
        <authorList>
            <person name="Cazalet C."/>
            <person name="Rusniok C."/>
            <person name="Brueggemann H."/>
            <person name="Zidane N."/>
            <person name="Magnier A."/>
            <person name="Ma L."/>
            <person name="Tichit M."/>
            <person name="Jarraud S."/>
            <person name="Bouchier C."/>
            <person name="Vandenesch F."/>
            <person name="Kunst F."/>
            <person name="Etienne J."/>
            <person name="Glaser P."/>
            <person name="Buchrieser C."/>
        </authorList>
    </citation>
    <scope>NUCLEOTIDE SEQUENCE [LARGE SCALE GENOMIC DNA]</scope>
    <source>
        <strain>Paris</strain>
    </source>
</reference>